<keyword id="KW-1015">Disulfide bond</keyword>
<keyword id="KW-0297">G-protein coupled receptor</keyword>
<keyword id="KW-0325">Glycoprotein</keyword>
<keyword id="KW-0472">Membrane</keyword>
<keyword id="KW-0552">Olfaction</keyword>
<keyword id="KW-0675">Receptor</keyword>
<keyword id="KW-1185">Reference proteome</keyword>
<keyword id="KW-0716">Sensory transduction</keyword>
<keyword id="KW-0807">Transducer</keyword>
<keyword id="KW-0812">Transmembrane</keyword>
<keyword id="KW-1133">Transmembrane helix</keyword>
<name>OR1N2_HUMAN</name>
<proteinExistence type="evidence at transcript level"/>
<organism>
    <name type="scientific">Homo sapiens</name>
    <name type="common">Human</name>
    <dbReference type="NCBI Taxonomy" id="9606"/>
    <lineage>
        <taxon>Eukaryota</taxon>
        <taxon>Metazoa</taxon>
        <taxon>Chordata</taxon>
        <taxon>Craniata</taxon>
        <taxon>Vertebrata</taxon>
        <taxon>Euteleostomi</taxon>
        <taxon>Mammalia</taxon>
        <taxon>Eutheria</taxon>
        <taxon>Euarchontoglires</taxon>
        <taxon>Primates</taxon>
        <taxon>Haplorrhini</taxon>
        <taxon>Catarrhini</taxon>
        <taxon>Hominidae</taxon>
        <taxon>Homo</taxon>
    </lineage>
</organism>
<gene>
    <name type="primary">OR1N2</name>
</gene>
<protein>
    <recommendedName>
        <fullName>Olfactory receptor 1N2</fullName>
    </recommendedName>
    <alternativeName>
        <fullName>Olfactory receptor OR9-23</fullName>
    </alternativeName>
</protein>
<dbReference type="EMBL" id="AB065720">
    <property type="protein sequence ID" value="BAC05941.1"/>
    <property type="molecule type" value="Genomic_DNA"/>
</dbReference>
<dbReference type="EMBL" id="KP290529">
    <property type="protein sequence ID" value="ALI87690.1"/>
    <property type="molecule type" value="Genomic_DNA"/>
</dbReference>
<dbReference type="EMBL" id="AL359636">
    <property type="status" value="NOT_ANNOTATED_CDS"/>
    <property type="molecule type" value="Genomic_DNA"/>
</dbReference>
<dbReference type="EMBL" id="BC137182">
    <property type="protein sequence ID" value="AAI37183.1"/>
    <property type="molecule type" value="mRNA"/>
</dbReference>
<dbReference type="EMBL" id="BC137183">
    <property type="protein sequence ID" value="AAI37184.1"/>
    <property type="molecule type" value="mRNA"/>
</dbReference>
<dbReference type="EMBL" id="AF399536">
    <property type="protein sequence ID" value="AAK95021.1"/>
    <property type="molecule type" value="Genomic_DNA"/>
</dbReference>
<dbReference type="EMBL" id="BK004445">
    <property type="protein sequence ID" value="DAA04843.1"/>
    <property type="molecule type" value="Genomic_DNA"/>
</dbReference>
<dbReference type="CCDS" id="CCDS35123.2"/>
<dbReference type="RefSeq" id="NP_001004457.2">
    <property type="nucleotide sequence ID" value="NM_001004457.2"/>
</dbReference>
<dbReference type="SMR" id="Q8NGR9"/>
<dbReference type="FunCoup" id="Q8NGR9">
    <property type="interactions" value="496"/>
</dbReference>
<dbReference type="STRING" id="9606.ENSP00000483293"/>
<dbReference type="GlyCosmos" id="Q8NGR9">
    <property type="glycosylation" value="1 site, No reported glycans"/>
</dbReference>
<dbReference type="GlyGen" id="Q8NGR9">
    <property type="glycosylation" value="1 site"/>
</dbReference>
<dbReference type="PhosphoSitePlus" id="Q8NGR9"/>
<dbReference type="BioMuta" id="OR1N2"/>
<dbReference type="DMDM" id="218511727"/>
<dbReference type="MassIVE" id="Q8NGR9"/>
<dbReference type="PaxDb" id="9606-ENSP00000362792"/>
<dbReference type="Antibodypedia" id="30315">
    <property type="antibodies" value="75 antibodies from 15 providers"/>
</dbReference>
<dbReference type="DNASU" id="138882"/>
<dbReference type="Ensembl" id="ENST00000373688.3">
    <property type="protein sequence ID" value="ENSP00000362792.3"/>
    <property type="gene ID" value="ENSG00000171501.11"/>
</dbReference>
<dbReference type="GeneID" id="138882"/>
<dbReference type="KEGG" id="hsa:138882"/>
<dbReference type="MANE-Select" id="ENST00000373688.3">
    <property type="protein sequence ID" value="ENSP00000362792.3"/>
    <property type="RefSeq nucleotide sequence ID" value="NM_001004457.2"/>
    <property type="RefSeq protein sequence ID" value="NP_001004457.2"/>
</dbReference>
<dbReference type="UCSC" id="uc011lyx.3">
    <property type="organism name" value="human"/>
</dbReference>
<dbReference type="AGR" id="HGNC:15111"/>
<dbReference type="CTD" id="138882"/>
<dbReference type="GeneCards" id="OR1N2"/>
<dbReference type="HGNC" id="HGNC:15111">
    <property type="gene designation" value="OR1N2"/>
</dbReference>
<dbReference type="HPA" id="ENSG00000171501">
    <property type="expression patterns" value="Not detected"/>
</dbReference>
<dbReference type="neXtProt" id="NX_Q8NGR9"/>
<dbReference type="PharmGKB" id="PA32091"/>
<dbReference type="VEuPathDB" id="HostDB:ENSG00000171501"/>
<dbReference type="eggNOG" id="ENOG502SMIM">
    <property type="taxonomic scope" value="Eukaryota"/>
</dbReference>
<dbReference type="GeneTree" id="ENSGT00940000163103"/>
<dbReference type="HOGENOM" id="CLU_012526_8_1_1"/>
<dbReference type="InParanoid" id="Q8NGR9"/>
<dbReference type="OMA" id="LMLSICW"/>
<dbReference type="OrthoDB" id="9444602at2759"/>
<dbReference type="PAN-GO" id="Q8NGR9">
    <property type="GO annotations" value="3 GO annotations based on evolutionary models"/>
</dbReference>
<dbReference type="PhylomeDB" id="Q8NGR9"/>
<dbReference type="TreeFam" id="TF337210"/>
<dbReference type="PathwayCommons" id="Q8NGR9"/>
<dbReference type="Reactome" id="R-HSA-381753">
    <property type="pathway name" value="Olfactory Signaling Pathway"/>
</dbReference>
<dbReference type="Reactome" id="R-HSA-9752946">
    <property type="pathway name" value="Expression and translocation of olfactory receptors"/>
</dbReference>
<dbReference type="BioGRID-ORCS" id="138882">
    <property type="hits" value="11 hits in 748 CRISPR screens"/>
</dbReference>
<dbReference type="GeneWiki" id="OR1N2"/>
<dbReference type="GenomeRNAi" id="138882"/>
<dbReference type="Pharos" id="Q8NGR9">
    <property type="development level" value="Tdark"/>
</dbReference>
<dbReference type="PRO" id="PR:Q8NGR9"/>
<dbReference type="Proteomes" id="UP000005640">
    <property type="component" value="Chromosome 9"/>
</dbReference>
<dbReference type="RNAct" id="Q8NGR9">
    <property type="molecule type" value="protein"/>
</dbReference>
<dbReference type="Bgee" id="ENSG00000171501">
    <property type="expression patterns" value="Expressed in male germ line stem cell (sensu Vertebrata) in testis"/>
</dbReference>
<dbReference type="ExpressionAtlas" id="Q8NGR9">
    <property type="expression patterns" value="baseline and differential"/>
</dbReference>
<dbReference type="GO" id="GO:0005886">
    <property type="term" value="C:plasma membrane"/>
    <property type="evidence" value="ECO:0000318"/>
    <property type="project" value="GO_Central"/>
</dbReference>
<dbReference type="GO" id="GO:0004930">
    <property type="term" value="F:G protein-coupled receptor activity"/>
    <property type="evidence" value="ECO:0007669"/>
    <property type="project" value="UniProtKB-KW"/>
</dbReference>
<dbReference type="GO" id="GO:0004984">
    <property type="term" value="F:olfactory receptor activity"/>
    <property type="evidence" value="ECO:0000318"/>
    <property type="project" value="GO_Central"/>
</dbReference>
<dbReference type="GO" id="GO:0007165">
    <property type="term" value="P:signal transduction"/>
    <property type="evidence" value="ECO:0000318"/>
    <property type="project" value="GO_Central"/>
</dbReference>
<dbReference type="CDD" id="cd15918">
    <property type="entry name" value="7tmA_OR1_7-like"/>
    <property type="match status" value="1"/>
</dbReference>
<dbReference type="FunFam" id="1.20.1070.10:FF:000009">
    <property type="entry name" value="Olfactory receptor"/>
    <property type="match status" value="1"/>
</dbReference>
<dbReference type="Gene3D" id="1.20.1070.10">
    <property type="entry name" value="Rhodopsin 7-helix transmembrane proteins"/>
    <property type="match status" value="1"/>
</dbReference>
<dbReference type="InterPro" id="IPR000276">
    <property type="entry name" value="GPCR_Rhodpsn"/>
</dbReference>
<dbReference type="InterPro" id="IPR017452">
    <property type="entry name" value="GPCR_Rhodpsn_7TM"/>
</dbReference>
<dbReference type="InterPro" id="IPR000725">
    <property type="entry name" value="Olfact_rcpt"/>
</dbReference>
<dbReference type="PANTHER" id="PTHR48001">
    <property type="entry name" value="OLFACTORY RECEPTOR"/>
    <property type="match status" value="1"/>
</dbReference>
<dbReference type="Pfam" id="PF13853">
    <property type="entry name" value="7tm_4"/>
    <property type="match status" value="1"/>
</dbReference>
<dbReference type="PRINTS" id="PR00237">
    <property type="entry name" value="GPCRRHODOPSN"/>
</dbReference>
<dbReference type="PRINTS" id="PR00245">
    <property type="entry name" value="OLFACTORYR"/>
</dbReference>
<dbReference type="SUPFAM" id="SSF81321">
    <property type="entry name" value="Family A G protein-coupled receptor-like"/>
    <property type="match status" value="1"/>
</dbReference>
<dbReference type="PROSITE" id="PS00237">
    <property type="entry name" value="G_PROTEIN_RECEP_F1_1"/>
    <property type="match status" value="1"/>
</dbReference>
<dbReference type="PROSITE" id="PS50262">
    <property type="entry name" value="G_PROTEIN_RECEP_F1_2"/>
    <property type="match status" value="1"/>
</dbReference>
<reference key="1">
    <citation type="submission" date="2001-07" db="EMBL/GenBank/DDBJ databases">
        <title>Genome-wide discovery and analysis of human seven transmembrane helix receptor genes.</title>
        <authorList>
            <person name="Suwa M."/>
            <person name="Sato T."/>
            <person name="Okouchi I."/>
            <person name="Arita M."/>
            <person name="Futami K."/>
            <person name="Matsumoto S."/>
            <person name="Tsutsumi S."/>
            <person name="Aburatani H."/>
            <person name="Asai K."/>
            <person name="Akiyama Y."/>
        </authorList>
    </citation>
    <scope>NUCLEOTIDE SEQUENCE [GENOMIC DNA]</scope>
</reference>
<reference key="2">
    <citation type="journal article" date="2015" name="Sci. Data">
        <title>Human olfactory receptor responses to odorants.</title>
        <authorList>
            <person name="Mainland J.D."/>
            <person name="Li Y.R."/>
            <person name="Zhou T."/>
            <person name="Liu W.L."/>
            <person name="Matsunami H."/>
        </authorList>
    </citation>
    <scope>NUCLEOTIDE SEQUENCE [GENOMIC DNA]</scope>
</reference>
<reference key="3">
    <citation type="journal article" date="2004" name="Nature">
        <title>DNA sequence and analysis of human chromosome 9.</title>
        <authorList>
            <person name="Humphray S.J."/>
            <person name="Oliver K."/>
            <person name="Hunt A.R."/>
            <person name="Plumb R.W."/>
            <person name="Loveland J.E."/>
            <person name="Howe K.L."/>
            <person name="Andrews T.D."/>
            <person name="Searle S."/>
            <person name="Hunt S.E."/>
            <person name="Scott C.E."/>
            <person name="Jones M.C."/>
            <person name="Ainscough R."/>
            <person name="Almeida J.P."/>
            <person name="Ambrose K.D."/>
            <person name="Ashwell R.I.S."/>
            <person name="Babbage A.K."/>
            <person name="Babbage S."/>
            <person name="Bagguley C.L."/>
            <person name="Bailey J."/>
            <person name="Banerjee R."/>
            <person name="Barker D.J."/>
            <person name="Barlow K.F."/>
            <person name="Bates K."/>
            <person name="Beasley H."/>
            <person name="Beasley O."/>
            <person name="Bird C.P."/>
            <person name="Bray-Allen S."/>
            <person name="Brown A.J."/>
            <person name="Brown J.Y."/>
            <person name="Burford D."/>
            <person name="Burrill W."/>
            <person name="Burton J."/>
            <person name="Carder C."/>
            <person name="Carter N.P."/>
            <person name="Chapman J.C."/>
            <person name="Chen Y."/>
            <person name="Clarke G."/>
            <person name="Clark S.Y."/>
            <person name="Clee C.M."/>
            <person name="Clegg S."/>
            <person name="Collier R.E."/>
            <person name="Corby N."/>
            <person name="Crosier M."/>
            <person name="Cummings A.T."/>
            <person name="Davies J."/>
            <person name="Dhami P."/>
            <person name="Dunn M."/>
            <person name="Dutta I."/>
            <person name="Dyer L.W."/>
            <person name="Earthrowl M.E."/>
            <person name="Faulkner L."/>
            <person name="Fleming C.J."/>
            <person name="Frankish A."/>
            <person name="Frankland J.A."/>
            <person name="French L."/>
            <person name="Fricker D.G."/>
            <person name="Garner P."/>
            <person name="Garnett J."/>
            <person name="Ghori J."/>
            <person name="Gilbert J.G.R."/>
            <person name="Glison C."/>
            <person name="Grafham D.V."/>
            <person name="Gribble S."/>
            <person name="Griffiths C."/>
            <person name="Griffiths-Jones S."/>
            <person name="Grocock R."/>
            <person name="Guy J."/>
            <person name="Hall R.E."/>
            <person name="Hammond S."/>
            <person name="Harley J.L."/>
            <person name="Harrison E.S.I."/>
            <person name="Hart E.A."/>
            <person name="Heath P.D."/>
            <person name="Henderson C.D."/>
            <person name="Hopkins B.L."/>
            <person name="Howard P.J."/>
            <person name="Howden P.J."/>
            <person name="Huckle E."/>
            <person name="Johnson C."/>
            <person name="Johnson D."/>
            <person name="Joy A.A."/>
            <person name="Kay M."/>
            <person name="Keenan S."/>
            <person name="Kershaw J.K."/>
            <person name="Kimberley A.M."/>
            <person name="King A."/>
            <person name="Knights A."/>
            <person name="Laird G.K."/>
            <person name="Langford C."/>
            <person name="Lawlor S."/>
            <person name="Leongamornlert D.A."/>
            <person name="Leversha M."/>
            <person name="Lloyd C."/>
            <person name="Lloyd D.M."/>
            <person name="Lovell J."/>
            <person name="Martin S."/>
            <person name="Mashreghi-Mohammadi M."/>
            <person name="Matthews L."/>
            <person name="McLaren S."/>
            <person name="McLay K.E."/>
            <person name="McMurray A."/>
            <person name="Milne S."/>
            <person name="Nickerson T."/>
            <person name="Nisbett J."/>
            <person name="Nordsiek G."/>
            <person name="Pearce A.V."/>
            <person name="Peck A.I."/>
            <person name="Porter K.M."/>
            <person name="Pandian R."/>
            <person name="Pelan S."/>
            <person name="Phillimore B."/>
            <person name="Povey S."/>
            <person name="Ramsey Y."/>
            <person name="Rand V."/>
            <person name="Scharfe M."/>
            <person name="Sehra H.K."/>
            <person name="Shownkeen R."/>
            <person name="Sims S.K."/>
            <person name="Skuce C.D."/>
            <person name="Smith M."/>
            <person name="Steward C.A."/>
            <person name="Swarbreck D."/>
            <person name="Sycamore N."/>
            <person name="Tester J."/>
            <person name="Thorpe A."/>
            <person name="Tracey A."/>
            <person name="Tromans A."/>
            <person name="Thomas D.W."/>
            <person name="Wall M."/>
            <person name="Wallis J.M."/>
            <person name="West A.P."/>
            <person name="Whitehead S.L."/>
            <person name="Willey D.L."/>
            <person name="Williams S.A."/>
            <person name="Wilming L."/>
            <person name="Wray P.W."/>
            <person name="Young L."/>
            <person name="Ashurst J.L."/>
            <person name="Coulson A."/>
            <person name="Blocker H."/>
            <person name="Durbin R.M."/>
            <person name="Sulston J.E."/>
            <person name="Hubbard T."/>
            <person name="Jackson M.J."/>
            <person name="Bentley D.R."/>
            <person name="Beck S."/>
            <person name="Rogers J."/>
            <person name="Dunham I."/>
        </authorList>
    </citation>
    <scope>NUCLEOTIDE SEQUENCE [LARGE SCALE GENOMIC DNA]</scope>
</reference>
<reference key="4">
    <citation type="journal article" date="2004" name="Genome Res.">
        <title>The status, quality, and expansion of the NIH full-length cDNA project: the Mammalian Gene Collection (MGC).</title>
        <authorList>
            <consortium name="The MGC Project Team"/>
        </authorList>
    </citation>
    <scope>NUCLEOTIDE SEQUENCE [LARGE SCALE MRNA]</scope>
    <scope>VARIANTS ARG-23; GLY-230 AND MET-287</scope>
</reference>
<reference key="5">
    <citation type="journal article" date="2002" name="Genomics">
        <title>DEFOG: a practical scheme for deciphering families of genes.</title>
        <authorList>
            <person name="Fuchs T."/>
            <person name="Malecova B."/>
            <person name="Linhart C."/>
            <person name="Sharan R."/>
            <person name="Khen M."/>
            <person name="Herwig R."/>
            <person name="Shmulevich D."/>
            <person name="Elkon R."/>
            <person name="Steinfath M."/>
            <person name="O'Brien J.K."/>
            <person name="Radelof U."/>
            <person name="Lehrach H."/>
            <person name="Lancet D."/>
            <person name="Shamir R."/>
        </authorList>
    </citation>
    <scope>NUCLEOTIDE SEQUENCE [GENOMIC DNA] OF 71-287</scope>
</reference>
<reference key="6">
    <citation type="journal article" date="2004" name="Proc. Natl. Acad. Sci. U.S.A.">
        <title>The human olfactory receptor gene family.</title>
        <authorList>
            <person name="Malnic B."/>
            <person name="Godfrey P.A."/>
            <person name="Buck L.B."/>
        </authorList>
    </citation>
    <scope>IDENTIFICATION</scope>
</reference>
<reference key="7">
    <citation type="journal article" date="2004" name="Proc. Natl. Acad. Sci. U.S.A.">
        <authorList>
            <person name="Malnic B."/>
            <person name="Godfrey P.A."/>
            <person name="Buck L.B."/>
        </authorList>
    </citation>
    <scope>ERRATUM OF PUBMED:14983052</scope>
</reference>
<accession>Q8NGR9</accession>
<accession>A0A126GW94</accession>
<accession>A3KFM2</accession>
<accession>B2RNY4</accession>
<accession>Q6IF17</accession>
<accession>Q96RA3</accession>
<comment type="function">
    <text evidence="4">Odorant receptor.</text>
</comment>
<comment type="subcellular location">
    <subcellularLocation>
        <location evidence="1">Membrane</location>
        <topology evidence="1">Multi-pass membrane protein</topology>
    </subcellularLocation>
</comment>
<comment type="similarity">
    <text evidence="2">Belongs to the G-protein coupled receptor 1 family.</text>
</comment>
<comment type="online information" name="Human Olfactory Receptor Data Exploratorium (HORDE)">
    <link uri="http://genome.weizmann.ac.il/horde/card/index/symbol:OR1N2"/>
</comment>
<evidence type="ECO:0000255" key="1"/>
<evidence type="ECO:0000255" key="2">
    <source>
        <dbReference type="PROSITE-ProRule" id="PRU00521"/>
    </source>
</evidence>
<evidence type="ECO:0000269" key="3">
    <source>
    </source>
</evidence>
<evidence type="ECO:0000305" key="4"/>
<sequence>MGKPGRVNQTTVSDFLLLGLSEWPEEQPLLFGIFLGMYLVTMVGNLLIILAISSDPHLHTPMYFFLANLSLTDACFTSASIPKMLANIHTQSQIISYSGCLAQLYFLLMFGGLDNCLLAVMAYDRYVAICQPLHYSTSMSPQLCALMLGVCWVLTNCPALMHTLLLTRVAFCAQKAIPHFYCDPSALLKLACSDTHVNELMIITMGLLFLTVPLLLIVFSYVRIFWAVFVISSPGGRWKAFSTCGSHLTVVLLFYGSLMGVYLLPPSTYSTERESRAAVLYMVIIPTLNPFIYSLRNRDMKEALGKLFVSGKTFFL</sequence>
<feature type="chain" id="PRO_0000150449" description="Olfactory receptor 1N2">
    <location>
        <begin position="1"/>
        <end position="316"/>
    </location>
</feature>
<feature type="topological domain" description="Extracellular" evidence="4">
    <location>
        <begin position="1"/>
        <end position="28"/>
    </location>
</feature>
<feature type="transmembrane region" description="Helical" evidence="1">
    <location>
        <begin position="29"/>
        <end position="49"/>
    </location>
</feature>
<feature type="topological domain" description="Cytoplasmic" evidence="4">
    <location>
        <begin position="50"/>
        <end position="60"/>
    </location>
</feature>
<feature type="transmembrane region" description="Helical" evidence="1">
    <location>
        <begin position="61"/>
        <end position="81"/>
    </location>
</feature>
<feature type="topological domain" description="Extracellular" evidence="4">
    <location>
        <begin position="82"/>
        <end position="100"/>
    </location>
</feature>
<feature type="transmembrane region" description="Helical" evidence="1">
    <location>
        <begin position="101"/>
        <end position="121"/>
    </location>
</feature>
<feature type="topological domain" description="Cytoplasmic" evidence="4">
    <location>
        <begin position="122"/>
        <end position="145"/>
    </location>
</feature>
<feature type="transmembrane region" description="Helical" evidence="1">
    <location>
        <begin position="146"/>
        <end position="166"/>
    </location>
</feature>
<feature type="topological domain" description="Extracellular" evidence="4">
    <location>
        <begin position="167"/>
        <end position="199"/>
    </location>
</feature>
<feature type="transmembrane region" description="Helical" evidence="1">
    <location>
        <begin position="200"/>
        <end position="220"/>
    </location>
</feature>
<feature type="topological domain" description="Cytoplasmic" evidence="4">
    <location>
        <begin position="221"/>
        <end position="243"/>
    </location>
</feature>
<feature type="transmembrane region" description="Helical" evidence="1">
    <location>
        <begin position="244"/>
        <end position="264"/>
    </location>
</feature>
<feature type="topological domain" description="Extracellular" evidence="4">
    <location>
        <begin position="265"/>
        <end position="274"/>
    </location>
</feature>
<feature type="transmembrane region" description="Helical" evidence="1">
    <location>
        <begin position="275"/>
        <end position="295"/>
    </location>
</feature>
<feature type="topological domain" description="Cytoplasmic" evidence="4">
    <location>
        <begin position="296"/>
        <end position="316"/>
    </location>
</feature>
<feature type="glycosylation site" description="N-linked (GlcNAc...) asparagine" evidence="1">
    <location>
        <position position="8"/>
    </location>
</feature>
<feature type="disulfide bond" evidence="2">
    <location>
        <begin position="100"/>
        <end position="182"/>
    </location>
</feature>
<feature type="sequence variant" id="VAR_048028" description="In dbSNP:rs1831370." evidence="3">
    <original>W</original>
    <variation>R</variation>
    <location>
        <position position="23"/>
    </location>
</feature>
<feature type="sequence variant" id="VAR_062012" description="In dbSNP:rs41316976.">
    <original>R</original>
    <variation>C</variation>
    <location>
        <position position="223"/>
    </location>
</feature>
<feature type="sequence variant" id="VAR_048029" description="In dbSNP:rs1341044." evidence="3">
    <original>V</original>
    <variation>G</variation>
    <location>
        <position position="230"/>
    </location>
</feature>
<feature type="sequence variant" id="VAR_048030" description="In dbSNP:rs1411272." evidence="3">
    <original>T</original>
    <variation>M</variation>
    <location>
        <position position="287"/>
    </location>
</feature>